<organism>
    <name type="scientific">Mus musculus</name>
    <name type="common">Mouse</name>
    <dbReference type="NCBI Taxonomy" id="10090"/>
    <lineage>
        <taxon>Eukaryota</taxon>
        <taxon>Metazoa</taxon>
        <taxon>Chordata</taxon>
        <taxon>Craniata</taxon>
        <taxon>Vertebrata</taxon>
        <taxon>Euteleostomi</taxon>
        <taxon>Mammalia</taxon>
        <taxon>Eutheria</taxon>
        <taxon>Euarchontoglires</taxon>
        <taxon>Glires</taxon>
        <taxon>Rodentia</taxon>
        <taxon>Myomorpha</taxon>
        <taxon>Muroidea</taxon>
        <taxon>Muridae</taxon>
        <taxon>Murinae</taxon>
        <taxon>Mus</taxon>
        <taxon>Mus</taxon>
    </lineage>
</organism>
<dbReference type="EMBL" id="AY225093">
    <property type="protein sequence ID" value="AAO73939.1"/>
    <property type="molecule type" value="mRNA"/>
</dbReference>
<dbReference type="EMBL" id="AY251192">
    <property type="protein sequence ID" value="AAP32743.1"/>
    <property type="molecule type" value="mRNA"/>
</dbReference>
<dbReference type="EMBL" id="AK014873">
    <property type="protein sequence ID" value="BAB29596.1"/>
    <property type="molecule type" value="mRNA"/>
</dbReference>
<dbReference type="EMBL" id="AK014982">
    <property type="protein sequence ID" value="BAB29652.1"/>
    <property type="molecule type" value="mRNA"/>
</dbReference>
<dbReference type="EMBL" id="AK016484">
    <property type="protein sequence ID" value="BAB30264.1"/>
    <property type="molecule type" value="mRNA"/>
</dbReference>
<dbReference type="EMBL" id="AK028458">
    <property type="protein sequence ID" value="BAC25962.1"/>
    <property type="molecule type" value="mRNA"/>
</dbReference>
<dbReference type="EMBL" id="CT010488">
    <property type="status" value="NOT_ANNOTATED_CDS"/>
    <property type="molecule type" value="Genomic_DNA"/>
</dbReference>
<dbReference type="EMBL" id="CH466522">
    <property type="protein sequence ID" value="EDL24979.1"/>
    <property type="molecule type" value="Genomic_DNA"/>
</dbReference>
<dbReference type="EMBL" id="BC050785">
    <property type="protein sequence ID" value="AAH50785.1"/>
    <property type="status" value="ALT_INIT"/>
    <property type="molecule type" value="mRNA"/>
</dbReference>
<dbReference type="EMBL" id="AK129053">
    <property type="protein sequence ID" value="BAC97863.1"/>
    <property type="status" value="ALT_INIT"/>
    <property type="molecule type" value="mRNA"/>
</dbReference>
<dbReference type="CCDS" id="CCDS52724.1">
    <molecule id="Q8CEE0-1"/>
</dbReference>
<dbReference type="RefSeq" id="NP_001297650.1">
    <property type="nucleotide sequence ID" value="NM_001310721.1"/>
</dbReference>
<dbReference type="RefSeq" id="NP_080941.3">
    <molecule id="Q8CEE0-1"/>
    <property type="nucleotide sequence ID" value="NM_026665.4"/>
</dbReference>
<dbReference type="RefSeq" id="XP_006510712.1">
    <molecule id="Q8CEE0-3"/>
    <property type="nucleotide sequence ID" value="XM_006510649.3"/>
</dbReference>
<dbReference type="RefSeq" id="XP_030100541.1">
    <molecule id="Q8CEE0-3"/>
    <property type="nucleotide sequence ID" value="XM_030244681.2"/>
</dbReference>
<dbReference type="SMR" id="Q8CEE0"/>
<dbReference type="BioGRID" id="216689">
    <property type="interactions" value="5"/>
</dbReference>
<dbReference type="FunCoup" id="Q8CEE0">
    <property type="interactions" value="3656"/>
</dbReference>
<dbReference type="STRING" id="10090.ENSMUSP00000034398"/>
<dbReference type="iPTMnet" id="Q8CEE0"/>
<dbReference type="PhosphoSitePlus" id="Q8CEE0"/>
<dbReference type="PaxDb" id="10090-ENSMUSP00000034398"/>
<dbReference type="ProteomicsDB" id="281196">
    <molecule id="Q8CEE0-1"/>
</dbReference>
<dbReference type="ProteomicsDB" id="281197">
    <molecule id="Q8CEE0-2"/>
</dbReference>
<dbReference type="ProteomicsDB" id="281198">
    <molecule id="Q8CEE0-3"/>
</dbReference>
<dbReference type="Antibodypedia" id="17918">
    <property type="antibodies" value="234 antibodies from 27 providers"/>
</dbReference>
<dbReference type="DNASU" id="74360"/>
<dbReference type="Ensembl" id="ENSMUST00000034398.12">
    <molecule id="Q8CEE0-1"/>
    <property type="protein sequence ID" value="ENSMUSP00000034398.6"/>
    <property type="gene ID" value="ENSMUSG00000031922.13"/>
</dbReference>
<dbReference type="Ensembl" id="ENSMUST00000124883.8">
    <molecule id="Q8CEE0-3"/>
    <property type="protein sequence ID" value="ENSMUSP00000119081.2"/>
    <property type="gene ID" value="ENSMUSG00000031922.13"/>
</dbReference>
<dbReference type="Ensembl" id="ENSMUST00000148086.8">
    <molecule id="Q8CEE0-2"/>
    <property type="protein sequence ID" value="ENSMUSP00000114665.2"/>
    <property type="gene ID" value="ENSMUSG00000031922.13"/>
</dbReference>
<dbReference type="GeneID" id="74360"/>
<dbReference type="KEGG" id="mmu:74360"/>
<dbReference type="UCSC" id="uc009oea.2">
    <molecule id="Q8CEE0-3"/>
    <property type="organism name" value="mouse"/>
</dbReference>
<dbReference type="UCSC" id="uc009oeb.2">
    <molecule id="Q8CEE0-1"/>
    <property type="organism name" value="mouse"/>
</dbReference>
<dbReference type="AGR" id="MGI:1915551"/>
<dbReference type="CTD" id="9702"/>
<dbReference type="MGI" id="MGI:1915551">
    <property type="gene designation" value="Cep57"/>
</dbReference>
<dbReference type="VEuPathDB" id="HostDB:ENSMUSG00000031922"/>
<dbReference type="eggNOG" id="ENOG502QTZR">
    <property type="taxonomic scope" value="Eukaryota"/>
</dbReference>
<dbReference type="GeneTree" id="ENSGT00530000063695"/>
<dbReference type="HOGENOM" id="CLU_034321_2_0_1"/>
<dbReference type="InParanoid" id="Q8CEE0"/>
<dbReference type="OMA" id="YMKQMIA"/>
<dbReference type="OrthoDB" id="76453at2759"/>
<dbReference type="PhylomeDB" id="Q8CEE0"/>
<dbReference type="TreeFam" id="TF329178"/>
<dbReference type="Reactome" id="R-MMU-2565942">
    <property type="pathway name" value="Regulation of PLK1 Activity at G2/M Transition"/>
</dbReference>
<dbReference type="Reactome" id="R-MMU-380259">
    <property type="pathway name" value="Loss of Nlp from mitotic centrosomes"/>
</dbReference>
<dbReference type="Reactome" id="R-MMU-380270">
    <property type="pathway name" value="Recruitment of mitotic centrosome proteins and complexes"/>
</dbReference>
<dbReference type="Reactome" id="R-MMU-380284">
    <property type="pathway name" value="Loss of proteins required for interphase microtubule organization from the centrosome"/>
</dbReference>
<dbReference type="Reactome" id="R-MMU-380320">
    <property type="pathway name" value="Recruitment of NuMA to mitotic centrosomes"/>
</dbReference>
<dbReference type="Reactome" id="R-MMU-5620912">
    <property type="pathway name" value="Anchoring of the basal body to the plasma membrane"/>
</dbReference>
<dbReference type="Reactome" id="R-MMU-8854518">
    <property type="pathway name" value="AURKA Activation by TPX2"/>
</dbReference>
<dbReference type="BioGRID-ORCS" id="74360">
    <property type="hits" value="11 hits in 79 CRISPR screens"/>
</dbReference>
<dbReference type="ChiTaRS" id="Cep57">
    <property type="organism name" value="mouse"/>
</dbReference>
<dbReference type="PRO" id="PR:Q8CEE0"/>
<dbReference type="Proteomes" id="UP000000589">
    <property type="component" value="Chromosome 9"/>
</dbReference>
<dbReference type="RNAct" id="Q8CEE0">
    <property type="molecule type" value="protein"/>
</dbReference>
<dbReference type="Bgee" id="ENSMUSG00000031922">
    <property type="expression patterns" value="Expressed in seminiferous tubule of testis and 240 other cell types or tissues"/>
</dbReference>
<dbReference type="ExpressionAtlas" id="Q8CEE0">
    <property type="expression patterns" value="baseline and differential"/>
</dbReference>
<dbReference type="GO" id="GO:0034451">
    <property type="term" value="C:centriolar satellite"/>
    <property type="evidence" value="ECO:0007669"/>
    <property type="project" value="Ensembl"/>
</dbReference>
<dbReference type="GO" id="GO:0005813">
    <property type="term" value="C:centrosome"/>
    <property type="evidence" value="ECO:0000314"/>
    <property type="project" value="UniProtKB"/>
</dbReference>
<dbReference type="GO" id="GO:0005737">
    <property type="term" value="C:cytoplasm"/>
    <property type="evidence" value="ECO:0000314"/>
    <property type="project" value="MGI"/>
</dbReference>
<dbReference type="GO" id="GO:0005829">
    <property type="term" value="C:cytosol"/>
    <property type="evidence" value="ECO:0007669"/>
    <property type="project" value="Ensembl"/>
</dbReference>
<dbReference type="GO" id="GO:0005794">
    <property type="term" value="C:Golgi apparatus"/>
    <property type="evidence" value="ECO:0007669"/>
    <property type="project" value="Ensembl"/>
</dbReference>
<dbReference type="GO" id="GO:0005874">
    <property type="term" value="C:microtubule"/>
    <property type="evidence" value="ECO:0000250"/>
    <property type="project" value="UniProtKB"/>
</dbReference>
<dbReference type="GO" id="GO:0005634">
    <property type="term" value="C:nucleus"/>
    <property type="evidence" value="ECO:0000314"/>
    <property type="project" value="HGNC-UCL"/>
</dbReference>
<dbReference type="GO" id="GO:0017134">
    <property type="term" value="F:fibroblast growth factor binding"/>
    <property type="evidence" value="ECO:0000250"/>
    <property type="project" value="UniProtKB"/>
</dbReference>
<dbReference type="GO" id="GO:0043015">
    <property type="term" value="F:gamma-tubulin binding"/>
    <property type="evidence" value="ECO:0007669"/>
    <property type="project" value="InterPro"/>
</dbReference>
<dbReference type="GO" id="GO:0008017">
    <property type="term" value="F:microtubule binding"/>
    <property type="evidence" value="ECO:0000314"/>
    <property type="project" value="UniProtKB"/>
</dbReference>
<dbReference type="GO" id="GO:0042803">
    <property type="term" value="F:protein homodimerization activity"/>
    <property type="evidence" value="ECO:0000250"/>
    <property type="project" value="UniProtKB"/>
</dbReference>
<dbReference type="GO" id="GO:0008543">
    <property type="term" value="P:fibroblast growth factor receptor signaling pathway"/>
    <property type="evidence" value="ECO:0000250"/>
    <property type="project" value="UniProtKB"/>
</dbReference>
<dbReference type="GO" id="GO:0051260">
    <property type="term" value="P:protein homooligomerization"/>
    <property type="evidence" value="ECO:0000353"/>
    <property type="project" value="UniProtKB"/>
</dbReference>
<dbReference type="GO" id="GO:0007286">
    <property type="term" value="P:spermatid development"/>
    <property type="evidence" value="ECO:0000270"/>
    <property type="project" value="HGNC-UCL"/>
</dbReference>
<dbReference type="FunFam" id="1.20.58.90:FF:000003">
    <property type="entry name" value="Centrosomal protein of 57 kDa"/>
    <property type="match status" value="1"/>
</dbReference>
<dbReference type="Gene3D" id="1.20.58.90">
    <property type="match status" value="1"/>
</dbReference>
<dbReference type="InterPro" id="IPR051756">
    <property type="entry name" value="Centrosomal_MT-associated"/>
</dbReference>
<dbReference type="InterPro" id="IPR025913">
    <property type="entry name" value="Cep57_CLD"/>
</dbReference>
<dbReference type="InterPro" id="IPR024957">
    <property type="entry name" value="Cep57_MT-bd_dom"/>
</dbReference>
<dbReference type="PANTHER" id="PTHR19336:SF11">
    <property type="entry name" value="CENTROSOMAL PROTEIN OF 57 KDA"/>
    <property type="match status" value="1"/>
</dbReference>
<dbReference type="PANTHER" id="PTHR19336">
    <property type="entry name" value="UNCHARACTERIZED DUF1167"/>
    <property type="match status" value="1"/>
</dbReference>
<dbReference type="Pfam" id="PF14073">
    <property type="entry name" value="Cep57_CLD"/>
    <property type="match status" value="1"/>
</dbReference>
<dbReference type="Pfam" id="PF06657">
    <property type="entry name" value="Cep57_MT_bd"/>
    <property type="match status" value="1"/>
</dbReference>
<protein>
    <recommendedName>
        <fullName>Centrosomal protein of 57 kDa</fullName>
        <shortName>Cep57</shortName>
    </recommendedName>
    <alternativeName>
        <fullName>Testis-specific protein 57</fullName>
    </alternativeName>
    <alternativeName>
        <fullName>Translokin</fullName>
    </alternativeName>
</protein>
<reference key="1">
    <citation type="journal article" date="2003" name="Nat. Cell Biol.">
        <title>Translokin is an intracellular mediator of FGF-2 trafficking.</title>
        <authorList>
            <person name="Bossard C."/>
            <person name="Laurell H."/>
            <person name="Van den Berghe L."/>
            <person name="Meunier S."/>
            <person name="Zanibellato C."/>
            <person name="Prats H."/>
        </authorList>
    </citation>
    <scope>NUCLEOTIDE SEQUENCE [MRNA] (ISOFORM 1)</scope>
    <scope>FUNCTION IN FGF2 TRAFFICKING</scope>
    <source>
        <strain>C57BL/6J</strain>
    </source>
</reference>
<reference key="2">
    <citation type="journal article" date="2004" name="Biol. Reprod.">
        <title>Tsp57: a novel gene induced during a specific stage of spermatogenesis.</title>
        <authorList>
            <person name="Kim Y.-S."/>
            <person name="Nakanishi G."/>
            <person name="Oudes A.J."/>
            <person name="Kim K.H."/>
            <person name="Wang H."/>
            <person name="Kilpatrick D.L."/>
            <person name="Jetten A.M."/>
        </authorList>
    </citation>
    <scope>NUCLEOTIDE SEQUENCE [MRNA] (ISOFORM 1)</scope>
    <scope>TISSUE SPECIFICITY</scope>
    <scope>SUBCELLULAR LOCATION</scope>
    <scope>INTERACTION WITH RAP80</scope>
    <source>
        <strain>Swiss Webster</strain>
        <tissue>Testis</tissue>
    </source>
</reference>
<reference key="3">
    <citation type="journal article" date="2005" name="Science">
        <title>The transcriptional landscape of the mammalian genome.</title>
        <authorList>
            <person name="Carninci P."/>
            <person name="Kasukawa T."/>
            <person name="Katayama S."/>
            <person name="Gough J."/>
            <person name="Frith M.C."/>
            <person name="Maeda N."/>
            <person name="Oyama R."/>
            <person name="Ravasi T."/>
            <person name="Lenhard B."/>
            <person name="Wells C."/>
            <person name="Kodzius R."/>
            <person name="Shimokawa K."/>
            <person name="Bajic V.B."/>
            <person name="Brenner S.E."/>
            <person name="Batalov S."/>
            <person name="Forrest A.R."/>
            <person name="Zavolan M."/>
            <person name="Davis M.J."/>
            <person name="Wilming L.G."/>
            <person name="Aidinis V."/>
            <person name="Allen J.E."/>
            <person name="Ambesi-Impiombato A."/>
            <person name="Apweiler R."/>
            <person name="Aturaliya R.N."/>
            <person name="Bailey T.L."/>
            <person name="Bansal M."/>
            <person name="Baxter L."/>
            <person name="Beisel K.W."/>
            <person name="Bersano T."/>
            <person name="Bono H."/>
            <person name="Chalk A.M."/>
            <person name="Chiu K.P."/>
            <person name="Choudhary V."/>
            <person name="Christoffels A."/>
            <person name="Clutterbuck D.R."/>
            <person name="Crowe M.L."/>
            <person name="Dalla E."/>
            <person name="Dalrymple B.P."/>
            <person name="de Bono B."/>
            <person name="Della Gatta G."/>
            <person name="di Bernardo D."/>
            <person name="Down T."/>
            <person name="Engstrom P."/>
            <person name="Fagiolini M."/>
            <person name="Faulkner G."/>
            <person name="Fletcher C.F."/>
            <person name="Fukushima T."/>
            <person name="Furuno M."/>
            <person name="Futaki S."/>
            <person name="Gariboldi M."/>
            <person name="Georgii-Hemming P."/>
            <person name="Gingeras T.R."/>
            <person name="Gojobori T."/>
            <person name="Green R.E."/>
            <person name="Gustincich S."/>
            <person name="Harbers M."/>
            <person name="Hayashi Y."/>
            <person name="Hensch T.K."/>
            <person name="Hirokawa N."/>
            <person name="Hill D."/>
            <person name="Huminiecki L."/>
            <person name="Iacono M."/>
            <person name="Ikeo K."/>
            <person name="Iwama A."/>
            <person name="Ishikawa T."/>
            <person name="Jakt M."/>
            <person name="Kanapin A."/>
            <person name="Katoh M."/>
            <person name="Kawasawa Y."/>
            <person name="Kelso J."/>
            <person name="Kitamura H."/>
            <person name="Kitano H."/>
            <person name="Kollias G."/>
            <person name="Krishnan S.P."/>
            <person name="Kruger A."/>
            <person name="Kummerfeld S.K."/>
            <person name="Kurochkin I.V."/>
            <person name="Lareau L.F."/>
            <person name="Lazarevic D."/>
            <person name="Lipovich L."/>
            <person name="Liu J."/>
            <person name="Liuni S."/>
            <person name="McWilliam S."/>
            <person name="Madan Babu M."/>
            <person name="Madera M."/>
            <person name="Marchionni L."/>
            <person name="Matsuda H."/>
            <person name="Matsuzawa S."/>
            <person name="Miki H."/>
            <person name="Mignone F."/>
            <person name="Miyake S."/>
            <person name="Morris K."/>
            <person name="Mottagui-Tabar S."/>
            <person name="Mulder N."/>
            <person name="Nakano N."/>
            <person name="Nakauchi H."/>
            <person name="Ng P."/>
            <person name="Nilsson R."/>
            <person name="Nishiguchi S."/>
            <person name="Nishikawa S."/>
            <person name="Nori F."/>
            <person name="Ohara O."/>
            <person name="Okazaki Y."/>
            <person name="Orlando V."/>
            <person name="Pang K.C."/>
            <person name="Pavan W.J."/>
            <person name="Pavesi G."/>
            <person name="Pesole G."/>
            <person name="Petrovsky N."/>
            <person name="Piazza S."/>
            <person name="Reed J."/>
            <person name="Reid J.F."/>
            <person name="Ring B.Z."/>
            <person name="Ringwald M."/>
            <person name="Rost B."/>
            <person name="Ruan Y."/>
            <person name="Salzberg S.L."/>
            <person name="Sandelin A."/>
            <person name="Schneider C."/>
            <person name="Schoenbach C."/>
            <person name="Sekiguchi K."/>
            <person name="Semple C.A."/>
            <person name="Seno S."/>
            <person name="Sessa L."/>
            <person name="Sheng Y."/>
            <person name="Shibata Y."/>
            <person name="Shimada H."/>
            <person name="Shimada K."/>
            <person name="Silva D."/>
            <person name="Sinclair B."/>
            <person name="Sperling S."/>
            <person name="Stupka E."/>
            <person name="Sugiura K."/>
            <person name="Sultana R."/>
            <person name="Takenaka Y."/>
            <person name="Taki K."/>
            <person name="Tammoja K."/>
            <person name="Tan S.L."/>
            <person name="Tang S."/>
            <person name="Taylor M.S."/>
            <person name="Tegner J."/>
            <person name="Teichmann S.A."/>
            <person name="Ueda H.R."/>
            <person name="van Nimwegen E."/>
            <person name="Verardo R."/>
            <person name="Wei C.L."/>
            <person name="Yagi K."/>
            <person name="Yamanishi H."/>
            <person name="Zabarovsky E."/>
            <person name="Zhu S."/>
            <person name="Zimmer A."/>
            <person name="Hide W."/>
            <person name="Bult C."/>
            <person name="Grimmond S.M."/>
            <person name="Teasdale R.D."/>
            <person name="Liu E.T."/>
            <person name="Brusic V."/>
            <person name="Quackenbush J."/>
            <person name="Wahlestedt C."/>
            <person name="Mattick J.S."/>
            <person name="Hume D.A."/>
            <person name="Kai C."/>
            <person name="Sasaki D."/>
            <person name="Tomaru Y."/>
            <person name="Fukuda S."/>
            <person name="Kanamori-Katayama M."/>
            <person name="Suzuki M."/>
            <person name="Aoki J."/>
            <person name="Arakawa T."/>
            <person name="Iida J."/>
            <person name="Imamura K."/>
            <person name="Itoh M."/>
            <person name="Kato T."/>
            <person name="Kawaji H."/>
            <person name="Kawagashira N."/>
            <person name="Kawashima T."/>
            <person name="Kojima M."/>
            <person name="Kondo S."/>
            <person name="Konno H."/>
            <person name="Nakano K."/>
            <person name="Ninomiya N."/>
            <person name="Nishio T."/>
            <person name="Okada M."/>
            <person name="Plessy C."/>
            <person name="Shibata K."/>
            <person name="Shiraki T."/>
            <person name="Suzuki S."/>
            <person name="Tagami M."/>
            <person name="Waki K."/>
            <person name="Watahiki A."/>
            <person name="Okamura-Oho Y."/>
            <person name="Suzuki H."/>
            <person name="Kawai J."/>
            <person name="Hayashizaki Y."/>
        </authorList>
    </citation>
    <scope>NUCLEOTIDE SEQUENCE [LARGE SCALE MRNA] (ISOFORMS 1; 2 AND 3)</scope>
    <source>
        <strain>C57BL/6J</strain>
        <tissue>Skin</tissue>
        <tissue>Testis</tissue>
    </source>
</reference>
<reference key="4">
    <citation type="journal article" date="2009" name="PLoS Biol.">
        <title>Lineage-specific biology revealed by a finished genome assembly of the mouse.</title>
        <authorList>
            <person name="Church D.M."/>
            <person name="Goodstadt L."/>
            <person name="Hillier L.W."/>
            <person name="Zody M.C."/>
            <person name="Goldstein S."/>
            <person name="She X."/>
            <person name="Bult C.J."/>
            <person name="Agarwala R."/>
            <person name="Cherry J.L."/>
            <person name="DiCuccio M."/>
            <person name="Hlavina W."/>
            <person name="Kapustin Y."/>
            <person name="Meric P."/>
            <person name="Maglott D."/>
            <person name="Birtle Z."/>
            <person name="Marques A.C."/>
            <person name="Graves T."/>
            <person name="Zhou S."/>
            <person name="Teague B."/>
            <person name="Potamousis K."/>
            <person name="Churas C."/>
            <person name="Place M."/>
            <person name="Herschleb J."/>
            <person name="Runnheim R."/>
            <person name="Forrest D."/>
            <person name="Amos-Landgraf J."/>
            <person name="Schwartz D.C."/>
            <person name="Cheng Z."/>
            <person name="Lindblad-Toh K."/>
            <person name="Eichler E.E."/>
            <person name="Ponting C.P."/>
        </authorList>
    </citation>
    <scope>NUCLEOTIDE SEQUENCE [LARGE SCALE GENOMIC DNA]</scope>
    <source>
        <strain>C57BL/6J</strain>
    </source>
</reference>
<reference key="5">
    <citation type="submission" date="2005-07" db="EMBL/GenBank/DDBJ databases">
        <authorList>
            <person name="Mural R.J."/>
            <person name="Adams M.D."/>
            <person name="Myers E.W."/>
            <person name="Smith H.O."/>
            <person name="Venter J.C."/>
        </authorList>
    </citation>
    <scope>NUCLEOTIDE SEQUENCE [LARGE SCALE GENOMIC DNA]</scope>
</reference>
<reference key="6">
    <citation type="journal article" date="2004" name="Genome Res.">
        <title>The status, quality, and expansion of the NIH full-length cDNA project: the Mammalian Gene Collection (MGC).</title>
        <authorList>
            <consortium name="The MGC Project Team"/>
        </authorList>
    </citation>
    <scope>NUCLEOTIDE SEQUENCE [LARGE SCALE MRNA] (ISOFORM 3)</scope>
    <source>
        <tissue>Testis</tissue>
    </source>
</reference>
<reference key="7">
    <citation type="journal article" date="2003" name="DNA Res.">
        <title>Prediction of the coding sequences of mouse homologues of KIAA gene: III. The complete nucleotide sequences of 500 mouse KIAA-homologous cDNAs identified by screening of terminal sequences of cDNA clones randomly sampled from size-fractionated libraries.</title>
        <authorList>
            <person name="Okazaki N."/>
            <person name="Kikuno R."/>
            <person name="Ohara R."/>
            <person name="Inamoto S."/>
            <person name="Koseki H."/>
            <person name="Hiraoka S."/>
            <person name="Saga Y."/>
            <person name="Nagase T."/>
            <person name="Ohara O."/>
            <person name="Koga H."/>
        </authorList>
    </citation>
    <scope>NUCLEOTIDE SEQUENCE [LARGE SCALE MRNA] OF 1-257 (ISOFORM 1)</scope>
    <source>
        <tissue>Embryonic tail</tissue>
    </source>
</reference>
<reference key="8">
    <citation type="journal article" date="2008" name="Biochem. J.">
        <title>Cep57, a multidomain protein with unique microtubule and centrosomal localization domains.</title>
        <authorList>
            <person name="Momotani K."/>
            <person name="Khromov A.S."/>
            <person name="Miyake T."/>
            <person name="Stukenberg P.T."/>
            <person name="Somlyo A.V."/>
        </authorList>
    </citation>
    <scope>FUNCTION</scope>
    <scope>SUBCELLULAR LOCATION</scope>
    <scope>TISSUE SPECIFICITY</scope>
    <scope>DOMAIN</scope>
    <scope>SUBUNIT</scope>
    <scope>INTERACTION WITH MICROTUBULES</scope>
</reference>
<keyword id="KW-0025">Alternative splicing</keyword>
<keyword id="KW-0175">Coiled coil</keyword>
<keyword id="KW-0963">Cytoplasm</keyword>
<keyword id="KW-0206">Cytoskeleton</keyword>
<keyword id="KW-0493">Microtubule</keyword>
<keyword id="KW-0539">Nucleus</keyword>
<keyword id="KW-0597">Phosphoprotein</keyword>
<keyword id="KW-1185">Reference proteome</keyword>
<proteinExistence type="evidence at protein level"/>
<name>CEP57_MOUSE</name>
<sequence length="500" mass="56909">MAAASVSAASDSQFSSVLAEPSRSNGNMVRHSSSPYVLYPPDKPFLNSDLRRSPNKPTFAYPESNSRAIFSALKNLQDKIRRLELERIQAEESVKTLSRETIEYKKVLDEQIQERENSKNEESKHNQELASQLVAAENKCNLLEKQLEYMRNMIKHAEMERTSVLEKQVSLERERQHDQTHVQSQLEKLDLLEQEYNKLTAMQALAEKKMQELESKLREEEQERKRMQARAAELQSGLEANRLIFEDKTTSCVSTSTRKIKKKKSKPPEKKGSRTYFGAQPHYRLCLGDMPFVAGTSTSPSHAVVANVQHVLHLMKHHSKALCNDRVVNSVPLAKQACSRVSKSKKSVVPPSSSVNEELSDVLQTLQDEFGQMSFDHQQLTKLIQESPTVELKDNLECELEALVGRMEAKANQITKVRKYQAQLEKQNIDKQKKELKANKKTLDEEGNSSGRSSGVPRTASKKDLAKQRPGEKSRKNLQLLKDMQTIQNSLQSSNLCWDY</sequence>
<gene>
    <name type="primary">Cep57</name>
    <name type="synonym">Kiaa0092</name>
    <name type="synonym">Tsp57</name>
</gene>
<feature type="chain" id="PRO_0000189533" description="Centrosomal protein of 57 kDa">
    <location>
        <begin position="1"/>
        <end position="500"/>
    </location>
</feature>
<feature type="region of interest" description="Disordered" evidence="4">
    <location>
        <begin position="1"/>
        <end position="59"/>
    </location>
</feature>
<feature type="region of interest" description="centrosome localization domain (CLD)">
    <location>
        <begin position="58"/>
        <end position="239"/>
    </location>
</feature>
<feature type="region of interest" description="Disordered" evidence="4">
    <location>
        <begin position="256"/>
        <end position="275"/>
    </location>
</feature>
<feature type="region of interest" description="Mediates interaction with microtubules">
    <location>
        <begin position="278"/>
        <end position="491"/>
    </location>
</feature>
<feature type="region of interest" description="Disordered" evidence="4">
    <location>
        <begin position="432"/>
        <end position="478"/>
    </location>
</feature>
<feature type="coiled-coil region" evidence="3">
    <location>
        <begin position="63"/>
        <end position="242"/>
    </location>
</feature>
<feature type="coiled-coil region" evidence="3">
    <location>
        <begin position="389"/>
        <end position="449"/>
    </location>
</feature>
<feature type="compositionally biased region" description="Low complexity" evidence="4">
    <location>
        <begin position="1"/>
        <end position="16"/>
    </location>
</feature>
<feature type="compositionally biased region" description="Polar residues" evidence="4">
    <location>
        <begin position="22"/>
        <end position="35"/>
    </location>
</feature>
<feature type="compositionally biased region" description="Basic and acidic residues" evidence="4">
    <location>
        <begin position="432"/>
        <end position="444"/>
    </location>
</feature>
<feature type="compositionally biased region" description="Basic and acidic residues" evidence="4">
    <location>
        <begin position="461"/>
        <end position="475"/>
    </location>
</feature>
<feature type="modified residue" description="Phosphoserine" evidence="2">
    <location>
        <position position="53"/>
    </location>
</feature>
<feature type="splice variant" id="VSP_012265" description="In isoform 3." evidence="8 9">
    <location>
        <begin position="1"/>
        <end position="149"/>
    </location>
</feature>
<feature type="splice variant" id="VSP_012266" description="In isoform 2." evidence="9">
    <location>
        <begin position="1"/>
        <end position="27"/>
    </location>
</feature>
<feature type="sequence conflict" description="In Ref. 3; BAB29596." evidence="10" ref="3">
    <original>S</original>
    <variation>P</variation>
    <location>
        <position position="5"/>
    </location>
</feature>
<feature type="sequence conflict" description="In Ref. 2; AAP32743." evidence="10" ref="2">
    <original>SVLAEPSRS</original>
    <variation>VRGGGASRC</variation>
    <location>
        <begin position="16"/>
        <end position="24"/>
    </location>
</feature>
<feature type="sequence conflict" description="In Ref. 1; AAO73939." evidence="10" ref="1">
    <original>GT</original>
    <variation>EK</variation>
    <location>
        <begin position="295"/>
        <end position="296"/>
    </location>
</feature>
<feature type="sequence conflict" description="In Ref. 3; BAC25962." evidence="10" ref="3">
    <original>S</original>
    <variation>N</variation>
    <location>
        <position position="353"/>
    </location>
</feature>
<feature type="sequence conflict" description="In Ref. 3; BAB29652." evidence="10" ref="3">
    <original>E</original>
    <variation>K</variation>
    <location>
        <position position="386"/>
    </location>
</feature>
<feature type="sequence conflict" description="In Ref. 3; BAB29652." evidence="10" ref="3">
    <original>V</original>
    <variation>F</variation>
    <location>
        <position position="417"/>
    </location>
</feature>
<feature type="sequence conflict" description="In Ref. 3; BAB29652." evidence="10" ref="3">
    <original>E</original>
    <variation>K</variation>
    <location>
        <position position="425"/>
    </location>
</feature>
<feature type="sequence conflict" description="In Ref. 3; BAB29652." evidence="10" ref="3">
    <original>K</original>
    <variation>R</variation>
    <location>
        <position position="431"/>
    </location>
</feature>
<feature type="sequence conflict" description="In Ref. 3; BAB29652." evidence="10" ref="3">
    <original>E</original>
    <variation>K</variation>
    <location>
        <position position="435"/>
    </location>
</feature>
<comment type="function">
    <text evidence="5 7">Centrosomal protein which may be required for microtubule attachment to centrosomes. May act by forming ring-like structures around microtubules. Mediates nuclear translocation and mitogenic activity of the internalized growth factor FGF2.</text>
</comment>
<comment type="subunit">
    <text evidence="1 6 7">Interacts with FGF2 and RAP80. Does not interact with FGF1 or FGF2 isoform 24 kDa (By similarity). Homodimer and homooligomer. Interacts with microtubules.</text>
</comment>
<comment type="subcellular location">
    <subcellularLocation>
        <location evidence="1">Nucleus</location>
    </subcellularLocation>
    <subcellularLocation>
        <location evidence="1">Cytoplasm</location>
    </subcellularLocation>
    <subcellularLocation>
        <location evidence="6 7">Cytoplasm</location>
        <location evidence="6 7">Cytoskeleton</location>
        <location evidence="6 7">Microtubule organizing center</location>
        <location evidence="6 7">Centrosome</location>
    </subcellularLocation>
</comment>
<comment type="alternative products">
    <event type="alternative splicing"/>
    <isoform>
        <id>Q8CEE0-1</id>
        <name>1</name>
        <sequence type="displayed"/>
    </isoform>
    <isoform>
        <id>Q8CEE0-2</id>
        <name>2</name>
        <sequence type="described" ref="VSP_012266"/>
    </isoform>
    <isoform>
        <id>Q8CEE0-3</id>
        <name>3</name>
        <sequence type="described" ref="VSP_012265"/>
    </isoform>
</comment>
<comment type="tissue specificity">
    <text evidence="6 7">Ubiquitous (at protein level). Expressed in testis, predominantly in round spermatids. Low expression is detected in other tissues.</text>
</comment>
<comment type="domain">
    <text evidence="7">The C-terminal region mediates the interaction with microtubules and is able to nucleate and bundles microtubules in vitro.</text>
</comment>
<comment type="domain">
    <text evidence="7">The centrosome localization domain (CLD) region mediates the localization to centrosomes and homooligomerization.</text>
</comment>
<comment type="similarity">
    <text evidence="10">Belongs to the translokin family.</text>
</comment>
<comment type="sequence caution" evidence="10">
    <conflict type="erroneous initiation">
        <sequence resource="EMBL-CDS" id="AAH50785"/>
    </conflict>
</comment>
<comment type="sequence caution" evidence="10">
    <conflict type="erroneous initiation">
        <sequence resource="EMBL-CDS" id="BAC97863"/>
    </conflict>
</comment>
<accession>Q8CEE0</accession>
<accession>B8JJE6</accession>
<accession>Q6ZQJ3</accession>
<accession>Q7TN18</accession>
<accession>Q80X65</accession>
<accession>Q810F2</accession>
<accession>Q9D4J4</accession>
<accession>Q9D5S4</accession>
<accession>Q9D5W5</accession>
<evidence type="ECO:0000250" key="1"/>
<evidence type="ECO:0000250" key="2">
    <source>
        <dbReference type="UniProtKB" id="Q86XR8"/>
    </source>
</evidence>
<evidence type="ECO:0000255" key="3"/>
<evidence type="ECO:0000256" key="4">
    <source>
        <dbReference type="SAM" id="MobiDB-lite"/>
    </source>
</evidence>
<evidence type="ECO:0000269" key="5">
    <source>
    </source>
</evidence>
<evidence type="ECO:0000269" key="6">
    <source>
    </source>
</evidence>
<evidence type="ECO:0000269" key="7">
    <source>
    </source>
</evidence>
<evidence type="ECO:0000303" key="8">
    <source>
    </source>
</evidence>
<evidence type="ECO:0000303" key="9">
    <source>
    </source>
</evidence>
<evidence type="ECO:0000305" key="10"/>